<feature type="chain" id="PRO_1000091227" description="UPF0102 protein Clim_0016">
    <location>
        <begin position="1"/>
        <end position="129"/>
    </location>
</feature>
<reference key="1">
    <citation type="submission" date="2008-05" db="EMBL/GenBank/DDBJ databases">
        <title>Complete sequence of Chlorobium limicola DSM 245.</title>
        <authorList>
            <consortium name="US DOE Joint Genome Institute"/>
            <person name="Lucas S."/>
            <person name="Copeland A."/>
            <person name="Lapidus A."/>
            <person name="Glavina del Rio T."/>
            <person name="Dalin E."/>
            <person name="Tice H."/>
            <person name="Bruce D."/>
            <person name="Goodwin L."/>
            <person name="Pitluck S."/>
            <person name="Schmutz J."/>
            <person name="Larimer F."/>
            <person name="Land M."/>
            <person name="Hauser L."/>
            <person name="Kyrpides N."/>
            <person name="Ovchinnikova G."/>
            <person name="Zhao F."/>
            <person name="Li T."/>
            <person name="Liu Z."/>
            <person name="Overmann J."/>
            <person name="Bryant D.A."/>
            <person name="Richardson P."/>
        </authorList>
    </citation>
    <scope>NUCLEOTIDE SEQUENCE [LARGE SCALE GENOMIC DNA]</scope>
    <source>
        <strain>DSM 245 / NBRC 103803 / 6330</strain>
    </source>
</reference>
<organism>
    <name type="scientific">Chlorobium limicola (strain DSM 245 / NBRC 103803 / 6330)</name>
    <dbReference type="NCBI Taxonomy" id="290315"/>
    <lineage>
        <taxon>Bacteria</taxon>
        <taxon>Pseudomonadati</taxon>
        <taxon>Chlorobiota</taxon>
        <taxon>Chlorobiia</taxon>
        <taxon>Chlorobiales</taxon>
        <taxon>Chlorobiaceae</taxon>
        <taxon>Chlorobium/Pelodictyon group</taxon>
        <taxon>Chlorobium</taxon>
    </lineage>
</organism>
<accession>B3EDP4</accession>
<evidence type="ECO:0000255" key="1">
    <source>
        <dbReference type="HAMAP-Rule" id="MF_00048"/>
    </source>
</evidence>
<dbReference type="EMBL" id="CP001097">
    <property type="protein sequence ID" value="ACD89124.1"/>
    <property type="molecule type" value="Genomic_DNA"/>
</dbReference>
<dbReference type="RefSeq" id="WP_012465005.1">
    <property type="nucleotide sequence ID" value="NC_010803.1"/>
</dbReference>
<dbReference type="SMR" id="B3EDP4"/>
<dbReference type="STRING" id="290315.Clim_0016"/>
<dbReference type="KEGG" id="cli:Clim_0016"/>
<dbReference type="eggNOG" id="COG0792">
    <property type="taxonomic scope" value="Bacteria"/>
</dbReference>
<dbReference type="HOGENOM" id="CLU_115353_2_1_10"/>
<dbReference type="OrthoDB" id="9802516at2"/>
<dbReference type="Proteomes" id="UP000008841">
    <property type="component" value="Chromosome"/>
</dbReference>
<dbReference type="GO" id="GO:0003676">
    <property type="term" value="F:nucleic acid binding"/>
    <property type="evidence" value="ECO:0007669"/>
    <property type="project" value="InterPro"/>
</dbReference>
<dbReference type="CDD" id="cd20736">
    <property type="entry name" value="PoNe_Nuclease"/>
    <property type="match status" value="1"/>
</dbReference>
<dbReference type="Gene3D" id="3.40.1350.10">
    <property type="match status" value="1"/>
</dbReference>
<dbReference type="HAMAP" id="MF_00048">
    <property type="entry name" value="UPF0102"/>
    <property type="match status" value="1"/>
</dbReference>
<dbReference type="InterPro" id="IPR011335">
    <property type="entry name" value="Restrct_endonuc-II-like"/>
</dbReference>
<dbReference type="InterPro" id="IPR011856">
    <property type="entry name" value="tRNA_endonuc-like_dom_sf"/>
</dbReference>
<dbReference type="InterPro" id="IPR003509">
    <property type="entry name" value="UPF0102_YraN-like"/>
</dbReference>
<dbReference type="NCBIfam" id="NF009150">
    <property type="entry name" value="PRK12497.1-3"/>
    <property type="match status" value="1"/>
</dbReference>
<dbReference type="NCBIfam" id="NF009154">
    <property type="entry name" value="PRK12497.3-3"/>
    <property type="match status" value="1"/>
</dbReference>
<dbReference type="NCBIfam" id="TIGR00252">
    <property type="entry name" value="YraN family protein"/>
    <property type="match status" value="1"/>
</dbReference>
<dbReference type="PANTHER" id="PTHR34039">
    <property type="entry name" value="UPF0102 PROTEIN YRAN"/>
    <property type="match status" value="1"/>
</dbReference>
<dbReference type="PANTHER" id="PTHR34039:SF1">
    <property type="entry name" value="UPF0102 PROTEIN YRAN"/>
    <property type="match status" value="1"/>
</dbReference>
<dbReference type="Pfam" id="PF02021">
    <property type="entry name" value="UPF0102"/>
    <property type="match status" value="1"/>
</dbReference>
<dbReference type="SUPFAM" id="SSF52980">
    <property type="entry name" value="Restriction endonuclease-like"/>
    <property type="match status" value="1"/>
</dbReference>
<gene>
    <name type="ordered locus">Clim_0016</name>
</gene>
<name>Y016_CHLL2</name>
<comment type="similarity">
    <text evidence="1">Belongs to the UPF0102 family.</text>
</comment>
<proteinExistence type="inferred from homology"/>
<protein>
    <recommendedName>
        <fullName evidence="1">UPF0102 protein Clim_0016</fullName>
    </recommendedName>
</protein>
<sequence length="129" mass="14931">MDHDPHSLGRQGELLAAEYLAGKGYRIIVRNYRHRRNEIDIIAFDGRTLCFIEVKTRGSLEKGHPVESVTPQKQKEIIKAARSYLLTLENREPDCRFDVIAILADAMDNDRIRSFTIEHFIDAFWEETG</sequence>